<evidence type="ECO:0000255" key="1">
    <source>
        <dbReference type="HAMAP-Rule" id="MF_00817"/>
    </source>
</evidence>
<evidence type="ECO:0000256" key="2">
    <source>
        <dbReference type="SAM" id="MobiDB-lite"/>
    </source>
</evidence>
<sequence length="278" mass="32018">MSTLRVLHEKSELGKTTVYPKEYAPHLLLPIPRDLNRKTLNVNVSEPPPFYGYDLWNAYELSWLNEKGKPFAARGEFIIPATSSHLIESKSFKLYLNSFNNERFADAAAVSQTMKRDLSKRVNESVTVNFILHETEIPVAYSPKGSLLDVLDIAIDTYSPDPNLLSTSQETVTETLYSHLLKSNCPVTGQPDWGSIEIHYTGPKIDHVQLLKYIISYRNHEEFHEACVERFFMDILRHCRPQELTVQARYTRRGGLDINPYRSTNPTFSVQNHRSFRQ</sequence>
<keyword id="KW-0963">Cytoplasm</keyword>
<keyword id="KW-0521">NADP</keyword>
<keyword id="KW-0560">Oxidoreductase</keyword>
<keyword id="KW-0671">Queuosine biosynthesis</keyword>
<proteinExistence type="inferred from homology"/>
<protein>
    <recommendedName>
        <fullName evidence="1">NADPH-dependent 7-cyano-7-deazaguanine reductase</fullName>
        <ecNumber evidence="1">1.7.1.13</ecNumber>
    </recommendedName>
    <alternativeName>
        <fullName evidence="1">7-cyano-7-carbaguanine reductase</fullName>
    </alternativeName>
    <alternativeName>
        <fullName evidence="1">NADPH-dependent nitrile oxidoreductase</fullName>
    </alternativeName>
    <alternativeName>
        <fullName evidence="1">PreQ(0) reductase</fullName>
    </alternativeName>
</protein>
<accession>B6J2N7</accession>
<name>QUEF_COXB2</name>
<gene>
    <name evidence="1" type="primary">queF</name>
    <name type="ordered locus">CbuG_1864</name>
</gene>
<reference key="1">
    <citation type="journal article" date="2009" name="Infect. Immun.">
        <title>Comparative genomics reveal extensive transposon-mediated genomic plasticity and diversity among potential effector proteins within the genus Coxiella.</title>
        <authorList>
            <person name="Beare P.A."/>
            <person name="Unsworth N."/>
            <person name="Andoh M."/>
            <person name="Voth D.E."/>
            <person name="Omsland A."/>
            <person name="Gilk S.D."/>
            <person name="Williams K.P."/>
            <person name="Sobral B.W."/>
            <person name="Kupko J.J. III"/>
            <person name="Porcella S.F."/>
            <person name="Samuel J.E."/>
            <person name="Heinzen R.A."/>
        </authorList>
    </citation>
    <scope>NUCLEOTIDE SEQUENCE [LARGE SCALE GENOMIC DNA]</scope>
    <source>
        <strain>CbuG_Q212</strain>
    </source>
</reference>
<feature type="chain" id="PRO_1000134275" description="NADPH-dependent 7-cyano-7-deazaguanine reductase">
    <location>
        <begin position="1"/>
        <end position="278"/>
    </location>
</feature>
<feature type="region of interest" description="Disordered" evidence="2">
    <location>
        <begin position="255"/>
        <end position="278"/>
    </location>
</feature>
<feature type="compositionally biased region" description="Polar residues" evidence="2">
    <location>
        <begin position="261"/>
        <end position="278"/>
    </location>
</feature>
<feature type="active site" description="Thioimide intermediate" evidence="1">
    <location>
        <position position="185"/>
    </location>
</feature>
<feature type="active site" description="Proton donor" evidence="1">
    <location>
        <position position="192"/>
    </location>
</feature>
<feature type="binding site" evidence="1">
    <location>
        <begin position="87"/>
        <end position="89"/>
    </location>
    <ligand>
        <name>substrate</name>
    </ligand>
</feature>
<feature type="binding site" evidence="1">
    <location>
        <begin position="89"/>
        <end position="90"/>
    </location>
    <ligand>
        <name>NADPH</name>
        <dbReference type="ChEBI" id="CHEBI:57783"/>
    </ligand>
</feature>
<feature type="binding site" evidence="1">
    <location>
        <begin position="224"/>
        <end position="225"/>
    </location>
    <ligand>
        <name>substrate</name>
    </ligand>
</feature>
<feature type="binding site" evidence="1">
    <location>
        <begin position="253"/>
        <end position="254"/>
    </location>
    <ligand>
        <name>NADPH</name>
        <dbReference type="ChEBI" id="CHEBI:57783"/>
    </ligand>
</feature>
<dbReference type="EC" id="1.7.1.13" evidence="1"/>
<dbReference type="EMBL" id="CP001019">
    <property type="protein sequence ID" value="ACJ19114.1"/>
    <property type="molecule type" value="Genomic_DNA"/>
</dbReference>
<dbReference type="RefSeq" id="WP_010957407.1">
    <property type="nucleotide sequence ID" value="NC_011527.1"/>
</dbReference>
<dbReference type="SMR" id="B6J2N7"/>
<dbReference type="KEGG" id="cbg:CbuG_1864"/>
<dbReference type="HOGENOM" id="CLU_054738_0_0_6"/>
<dbReference type="UniPathway" id="UPA00392"/>
<dbReference type="GO" id="GO:0005737">
    <property type="term" value="C:cytoplasm"/>
    <property type="evidence" value="ECO:0007669"/>
    <property type="project" value="UniProtKB-SubCell"/>
</dbReference>
<dbReference type="GO" id="GO:0033739">
    <property type="term" value="F:preQ1 synthase activity"/>
    <property type="evidence" value="ECO:0007669"/>
    <property type="project" value="UniProtKB-UniRule"/>
</dbReference>
<dbReference type="GO" id="GO:0008616">
    <property type="term" value="P:queuosine biosynthetic process"/>
    <property type="evidence" value="ECO:0007669"/>
    <property type="project" value="UniProtKB-UniRule"/>
</dbReference>
<dbReference type="GO" id="GO:0006400">
    <property type="term" value="P:tRNA modification"/>
    <property type="evidence" value="ECO:0007669"/>
    <property type="project" value="UniProtKB-UniRule"/>
</dbReference>
<dbReference type="Gene3D" id="3.30.1130.10">
    <property type="match status" value="2"/>
</dbReference>
<dbReference type="HAMAP" id="MF_00817">
    <property type="entry name" value="QueF_type2"/>
    <property type="match status" value="1"/>
</dbReference>
<dbReference type="InterPro" id="IPR043133">
    <property type="entry name" value="GTP-CH-I_C/QueF"/>
</dbReference>
<dbReference type="InterPro" id="IPR050084">
    <property type="entry name" value="NADPH_dep_7-cyano-7-deazaG_red"/>
</dbReference>
<dbReference type="InterPro" id="IPR029500">
    <property type="entry name" value="QueF"/>
</dbReference>
<dbReference type="InterPro" id="IPR029139">
    <property type="entry name" value="QueF_N"/>
</dbReference>
<dbReference type="InterPro" id="IPR016428">
    <property type="entry name" value="QueF_type2"/>
</dbReference>
<dbReference type="NCBIfam" id="TIGR03138">
    <property type="entry name" value="QueF"/>
    <property type="match status" value="1"/>
</dbReference>
<dbReference type="PANTHER" id="PTHR34354">
    <property type="entry name" value="NADPH-DEPENDENT 7-CYANO-7-DEAZAGUANINE REDUCTASE"/>
    <property type="match status" value="1"/>
</dbReference>
<dbReference type="PANTHER" id="PTHR34354:SF1">
    <property type="entry name" value="NADPH-DEPENDENT 7-CYANO-7-DEAZAGUANINE REDUCTASE"/>
    <property type="match status" value="1"/>
</dbReference>
<dbReference type="Pfam" id="PF14489">
    <property type="entry name" value="QueF"/>
    <property type="match status" value="1"/>
</dbReference>
<dbReference type="Pfam" id="PF14819">
    <property type="entry name" value="QueF_N"/>
    <property type="match status" value="1"/>
</dbReference>
<dbReference type="PIRSF" id="PIRSF004750">
    <property type="entry name" value="Nitrile_oxidored_YqcD_prd"/>
    <property type="match status" value="1"/>
</dbReference>
<dbReference type="SUPFAM" id="SSF55620">
    <property type="entry name" value="Tetrahydrobiopterin biosynthesis enzymes-like"/>
    <property type="match status" value="1"/>
</dbReference>
<organism>
    <name type="scientific">Coxiella burnetii (strain CbuG_Q212)</name>
    <name type="common">Coxiella burnetii (strain Q212)</name>
    <dbReference type="NCBI Taxonomy" id="434923"/>
    <lineage>
        <taxon>Bacteria</taxon>
        <taxon>Pseudomonadati</taxon>
        <taxon>Pseudomonadota</taxon>
        <taxon>Gammaproteobacteria</taxon>
        <taxon>Legionellales</taxon>
        <taxon>Coxiellaceae</taxon>
        <taxon>Coxiella</taxon>
    </lineage>
</organism>
<comment type="function">
    <text evidence="1">Catalyzes the NADPH-dependent reduction of 7-cyano-7-deazaguanine (preQ0) to 7-aminomethyl-7-deazaguanine (preQ1).</text>
</comment>
<comment type="catalytic activity">
    <reaction evidence="1">
        <text>7-aminomethyl-7-carbaguanine + 2 NADP(+) = 7-cyano-7-deazaguanine + 2 NADPH + 3 H(+)</text>
        <dbReference type="Rhea" id="RHEA:13409"/>
        <dbReference type="ChEBI" id="CHEBI:15378"/>
        <dbReference type="ChEBI" id="CHEBI:45075"/>
        <dbReference type="ChEBI" id="CHEBI:57783"/>
        <dbReference type="ChEBI" id="CHEBI:58349"/>
        <dbReference type="ChEBI" id="CHEBI:58703"/>
        <dbReference type="EC" id="1.7.1.13"/>
    </reaction>
</comment>
<comment type="pathway">
    <text evidence="1">tRNA modification; tRNA-queuosine biosynthesis.</text>
</comment>
<comment type="subunit">
    <text evidence="1">Homodimer.</text>
</comment>
<comment type="subcellular location">
    <subcellularLocation>
        <location evidence="1">Cytoplasm</location>
    </subcellularLocation>
</comment>
<comment type="similarity">
    <text evidence="1">Belongs to the GTP cyclohydrolase I family. QueF type 2 subfamily.</text>
</comment>